<comment type="function">
    <text evidence="1">Catalyzes both the ATP-dependent activation of exogenously supplied lipoate to lipoyl-AMP and the transfer of the activated lipoyl onto the lipoyl domains of lipoate-dependent enzymes.</text>
</comment>
<comment type="catalytic activity">
    <reaction evidence="1">
        <text>L-lysyl-[lipoyl-carrier protein] + (R)-lipoate + ATP = N(6)-[(R)-lipoyl]-L-lysyl-[lipoyl-carrier protein] + AMP + diphosphate + H(+)</text>
        <dbReference type="Rhea" id="RHEA:49288"/>
        <dbReference type="Rhea" id="RHEA-COMP:10500"/>
        <dbReference type="Rhea" id="RHEA-COMP:10502"/>
        <dbReference type="ChEBI" id="CHEBI:15378"/>
        <dbReference type="ChEBI" id="CHEBI:29969"/>
        <dbReference type="ChEBI" id="CHEBI:30616"/>
        <dbReference type="ChEBI" id="CHEBI:33019"/>
        <dbReference type="ChEBI" id="CHEBI:83088"/>
        <dbReference type="ChEBI" id="CHEBI:83099"/>
        <dbReference type="ChEBI" id="CHEBI:456215"/>
        <dbReference type="EC" id="6.3.1.20"/>
    </reaction>
</comment>
<comment type="pathway">
    <text evidence="1">Protein modification; protein lipoylation via exogenous pathway; protein N(6)-(lipoyl)lysine from lipoate: step 1/2.</text>
</comment>
<comment type="pathway">
    <text evidence="1">Protein modification; protein lipoylation via exogenous pathway; protein N(6)-(lipoyl)lysine from lipoate: step 2/2.</text>
</comment>
<comment type="subunit">
    <text evidence="1">Monomer.</text>
</comment>
<comment type="subcellular location">
    <subcellularLocation>
        <location evidence="1">Cytoplasm</location>
    </subcellularLocation>
</comment>
<comment type="miscellaneous">
    <text evidence="1">In the transfer reaction, the free carboxyl group of lipoic acid is attached via an amide linkage to the epsilon-amino group of a specific lysine residue of lipoyl domains of lipoate-dependent enzymes.</text>
</comment>
<comment type="similarity">
    <text evidence="1">Belongs to the LplA family.</text>
</comment>
<proteinExistence type="inferred from homology"/>
<reference key="1">
    <citation type="journal article" date="2006" name="J. Bacteriol.">
        <title>Complete genome sequence of Yersinia pestis strains Antiqua and Nepal516: evidence of gene reduction in an emerging pathogen.</title>
        <authorList>
            <person name="Chain P.S.G."/>
            <person name="Hu P."/>
            <person name="Malfatti S.A."/>
            <person name="Radnedge L."/>
            <person name="Larimer F."/>
            <person name="Vergez L.M."/>
            <person name="Worsham P."/>
            <person name="Chu M.C."/>
            <person name="Andersen G.L."/>
        </authorList>
    </citation>
    <scope>NUCLEOTIDE SEQUENCE [LARGE SCALE GENOMIC DNA]</scope>
    <source>
        <strain>Nepal516</strain>
    </source>
</reference>
<reference key="2">
    <citation type="submission" date="2009-04" db="EMBL/GenBank/DDBJ databases">
        <title>Yersinia pestis Nepal516A whole genome shotgun sequencing project.</title>
        <authorList>
            <person name="Plunkett G. III"/>
            <person name="Anderson B.D."/>
            <person name="Baumler D.J."/>
            <person name="Burland V."/>
            <person name="Cabot E.L."/>
            <person name="Glasner J.D."/>
            <person name="Mau B."/>
            <person name="Neeno-Eckwall E."/>
            <person name="Perna N.T."/>
            <person name="Munk A.C."/>
            <person name="Tapia R."/>
            <person name="Green L.D."/>
            <person name="Rogers Y.C."/>
            <person name="Detter J.C."/>
            <person name="Bruce D.C."/>
            <person name="Brettin T.S."/>
        </authorList>
    </citation>
    <scope>NUCLEOTIDE SEQUENCE [LARGE SCALE GENOMIC DNA]</scope>
    <source>
        <strain>Nepal516</strain>
    </source>
</reference>
<keyword id="KW-0067">ATP-binding</keyword>
<keyword id="KW-0963">Cytoplasm</keyword>
<keyword id="KW-0436">Ligase</keyword>
<keyword id="KW-0547">Nucleotide-binding</keyword>
<evidence type="ECO:0000255" key="1">
    <source>
        <dbReference type="HAMAP-Rule" id="MF_01602"/>
    </source>
</evidence>
<evidence type="ECO:0000255" key="2">
    <source>
        <dbReference type="PROSITE-ProRule" id="PRU01067"/>
    </source>
</evidence>
<feature type="chain" id="PRO_1000069394" description="Lipoate-protein ligase A">
    <location>
        <begin position="1"/>
        <end position="338"/>
    </location>
</feature>
<feature type="domain" description="BPL/LPL catalytic" evidence="2">
    <location>
        <begin position="29"/>
        <end position="216"/>
    </location>
</feature>
<feature type="binding site" evidence="1">
    <location>
        <position position="71"/>
    </location>
    <ligand>
        <name>ATP</name>
        <dbReference type="ChEBI" id="CHEBI:30616"/>
    </ligand>
</feature>
<feature type="binding site" evidence="1">
    <location>
        <begin position="76"/>
        <end position="79"/>
    </location>
    <ligand>
        <name>ATP</name>
        <dbReference type="ChEBI" id="CHEBI:30616"/>
    </ligand>
</feature>
<feature type="binding site" evidence="1">
    <location>
        <position position="134"/>
    </location>
    <ligand>
        <name>(R)-lipoate</name>
        <dbReference type="ChEBI" id="CHEBI:83088"/>
    </ligand>
</feature>
<feature type="binding site" evidence="1">
    <location>
        <position position="134"/>
    </location>
    <ligand>
        <name>ATP</name>
        <dbReference type="ChEBI" id="CHEBI:30616"/>
    </ligand>
</feature>
<accession>Q1CII3</accession>
<accession>C4GTH0</accession>
<name>LPLA_YERPN</name>
<dbReference type="EC" id="6.3.1.20" evidence="1"/>
<dbReference type="EMBL" id="CP000305">
    <property type="protein sequence ID" value="ABG18197.1"/>
    <property type="molecule type" value="Genomic_DNA"/>
</dbReference>
<dbReference type="EMBL" id="ACNQ01000010">
    <property type="protein sequence ID" value="EEO76771.1"/>
    <property type="molecule type" value="Genomic_DNA"/>
</dbReference>
<dbReference type="RefSeq" id="WP_002211816.1">
    <property type="nucleotide sequence ID" value="NZ_ACNQ01000010.1"/>
</dbReference>
<dbReference type="SMR" id="Q1CII3"/>
<dbReference type="KEGG" id="ypn:YPN_1868"/>
<dbReference type="HOGENOM" id="CLU_022986_0_1_6"/>
<dbReference type="UniPathway" id="UPA00537">
    <property type="reaction ID" value="UER00594"/>
</dbReference>
<dbReference type="UniPathway" id="UPA00537">
    <property type="reaction ID" value="UER00595"/>
</dbReference>
<dbReference type="Proteomes" id="UP000008936">
    <property type="component" value="Chromosome"/>
</dbReference>
<dbReference type="GO" id="GO:0005829">
    <property type="term" value="C:cytosol"/>
    <property type="evidence" value="ECO:0007669"/>
    <property type="project" value="TreeGrafter"/>
</dbReference>
<dbReference type="GO" id="GO:0005524">
    <property type="term" value="F:ATP binding"/>
    <property type="evidence" value="ECO:0007669"/>
    <property type="project" value="UniProtKB-KW"/>
</dbReference>
<dbReference type="GO" id="GO:0016979">
    <property type="term" value="F:lipoate-protein ligase activity"/>
    <property type="evidence" value="ECO:0007669"/>
    <property type="project" value="UniProtKB-UniRule"/>
</dbReference>
<dbReference type="GO" id="GO:0017118">
    <property type="term" value="F:lipoyltransferase activity"/>
    <property type="evidence" value="ECO:0007669"/>
    <property type="project" value="TreeGrafter"/>
</dbReference>
<dbReference type="GO" id="GO:0036211">
    <property type="term" value="P:protein modification process"/>
    <property type="evidence" value="ECO:0007669"/>
    <property type="project" value="InterPro"/>
</dbReference>
<dbReference type="CDD" id="cd16443">
    <property type="entry name" value="LplA"/>
    <property type="match status" value="1"/>
</dbReference>
<dbReference type="FunFam" id="3.30.930.10:FF:000024">
    <property type="entry name" value="Lipoate-protein ligase A"/>
    <property type="match status" value="1"/>
</dbReference>
<dbReference type="Gene3D" id="3.30.930.10">
    <property type="entry name" value="Bira Bifunctional Protein, Domain 2"/>
    <property type="match status" value="1"/>
</dbReference>
<dbReference type="Gene3D" id="3.30.390.50">
    <property type="entry name" value="CO dehydrogenase flavoprotein, C-terminal domain"/>
    <property type="match status" value="1"/>
</dbReference>
<dbReference type="HAMAP" id="MF_01602">
    <property type="entry name" value="LplA"/>
    <property type="match status" value="1"/>
</dbReference>
<dbReference type="InterPro" id="IPR045864">
    <property type="entry name" value="aa-tRNA-synth_II/BPL/LPL"/>
</dbReference>
<dbReference type="InterPro" id="IPR004143">
    <property type="entry name" value="BPL_LPL_catalytic"/>
</dbReference>
<dbReference type="InterPro" id="IPR023741">
    <property type="entry name" value="Lipoate_ligase_A"/>
</dbReference>
<dbReference type="InterPro" id="IPR019491">
    <property type="entry name" value="Lipoate_protein_ligase_C"/>
</dbReference>
<dbReference type="InterPro" id="IPR004562">
    <property type="entry name" value="LipoylTrfase_LipoateP_Ligase"/>
</dbReference>
<dbReference type="NCBIfam" id="TIGR00545">
    <property type="entry name" value="lipoyltrans"/>
    <property type="match status" value="1"/>
</dbReference>
<dbReference type="PANTHER" id="PTHR12561">
    <property type="entry name" value="LIPOATE-PROTEIN LIGASE"/>
    <property type="match status" value="1"/>
</dbReference>
<dbReference type="PANTHER" id="PTHR12561:SF3">
    <property type="entry name" value="LIPOYLTRANSFERASE 1, MITOCHONDRIAL"/>
    <property type="match status" value="1"/>
</dbReference>
<dbReference type="Pfam" id="PF10437">
    <property type="entry name" value="Lip_prot_lig_C"/>
    <property type="match status" value="1"/>
</dbReference>
<dbReference type="Pfam" id="PF21948">
    <property type="entry name" value="LplA-B_cat"/>
    <property type="match status" value="1"/>
</dbReference>
<dbReference type="SUPFAM" id="SSF55681">
    <property type="entry name" value="Class II aaRS and biotin synthetases"/>
    <property type="match status" value="1"/>
</dbReference>
<dbReference type="SUPFAM" id="SSF82649">
    <property type="entry name" value="SufE/NifU"/>
    <property type="match status" value="1"/>
</dbReference>
<dbReference type="PROSITE" id="PS51733">
    <property type="entry name" value="BPL_LPL_CATALYTIC"/>
    <property type="match status" value="1"/>
</dbReference>
<gene>
    <name evidence="1" type="primary">lplA</name>
    <name type="ordered locus">YPN_1868</name>
    <name type="ORF">YP516_2078</name>
</gene>
<organism>
    <name type="scientific">Yersinia pestis bv. Antiqua (strain Nepal516)</name>
    <dbReference type="NCBI Taxonomy" id="377628"/>
    <lineage>
        <taxon>Bacteria</taxon>
        <taxon>Pseudomonadati</taxon>
        <taxon>Pseudomonadota</taxon>
        <taxon>Gammaproteobacteria</taxon>
        <taxon>Enterobacterales</taxon>
        <taxon>Yersiniaceae</taxon>
        <taxon>Yersinia</taxon>
    </lineage>
</organism>
<sequence length="338" mass="37994">MSSLRLLISDSYDPWFNLAVEECIFRQMSPNQRVLFLWRNADTVVIGRAQNPWKECNTRRMEQDGVKLARRSSGGGAVFHDLGNTCFTFMAGKPGYDKTISTQIILNALASLGIQATASGRNDLVVINGEDERKVSGSAYKETKDRGFHHGTLLLNADLSRLADYLNPDPKKLQAKGITSVRSRVTNLVELLPGIDHGKIRTAIEQAFFAYYDEQVSAEVISPQSLPNLPGFTEQFAKQSSWEWNFGQAPAFSHVVDTRFIWGGIELHFDVLHGAIDRCQIFTDSLNPTPLEALAQRLQGAAYRPDAIDKICQHWIDDFPELQTELQQACHWLVEVLR</sequence>
<protein>
    <recommendedName>
        <fullName evidence="1">Lipoate-protein ligase A</fullName>
        <ecNumber evidence="1">6.3.1.20</ecNumber>
    </recommendedName>
    <alternativeName>
        <fullName evidence="1">Lipoate--protein ligase</fullName>
    </alternativeName>
</protein>